<organism>
    <name type="scientific">Shewanella frigidimarina (strain NCIMB 400)</name>
    <dbReference type="NCBI Taxonomy" id="318167"/>
    <lineage>
        <taxon>Bacteria</taxon>
        <taxon>Pseudomonadati</taxon>
        <taxon>Pseudomonadota</taxon>
        <taxon>Gammaproteobacteria</taxon>
        <taxon>Alteromonadales</taxon>
        <taxon>Shewanellaceae</taxon>
        <taxon>Shewanella</taxon>
    </lineage>
</organism>
<keyword id="KW-1185">Reference proteome</keyword>
<keyword id="KW-0687">Ribonucleoprotein</keyword>
<keyword id="KW-0689">Ribosomal protein</keyword>
<sequence>MVTIRLARGGAKKRPFYNIVVADSRNARDGRFIERVGFFNPLARGQEETLRLDLDRVEHWVATGAATSERVAKLIKDARKAVA</sequence>
<comment type="similarity">
    <text evidence="1">Belongs to the bacterial ribosomal protein bS16 family.</text>
</comment>
<proteinExistence type="inferred from homology"/>
<accession>Q07Z05</accession>
<protein>
    <recommendedName>
        <fullName evidence="1">Small ribosomal subunit protein bS16</fullName>
    </recommendedName>
    <alternativeName>
        <fullName evidence="2">30S ribosomal protein S16</fullName>
    </alternativeName>
</protein>
<feature type="chain" id="PRO_1000049346" description="Small ribosomal subunit protein bS16">
    <location>
        <begin position="1"/>
        <end position="83"/>
    </location>
</feature>
<reference key="1">
    <citation type="submission" date="2006-08" db="EMBL/GenBank/DDBJ databases">
        <title>Complete sequence of Shewanella frigidimarina NCIMB 400.</title>
        <authorList>
            <consortium name="US DOE Joint Genome Institute"/>
            <person name="Copeland A."/>
            <person name="Lucas S."/>
            <person name="Lapidus A."/>
            <person name="Barry K."/>
            <person name="Detter J.C."/>
            <person name="Glavina del Rio T."/>
            <person name="Hammon N."/>
            <person name="Israni S."/>
            <person name="Dalin E."/>
            <person name="Tice H."/>
            <person name="Pitluck S."/>
            <person name="Fredrickson J.K."/>
            <person name="Kolker E."/>
            <person name="McCuel L.A."/>
            <person name="DiChristina T."/>
            <person name="Nealson K.H."/>
            <person name="Newman D."/>
            <person name="Tiedje J.M."/>
            <person name="Zhou J."/>
            <person name="Romine M.F."/>
            <person name="Culley D.E."/>
            <person name="Serres M."/>
            <person name="Chertkov O."/>
            <person name="Brettin T."/>
            <person name="Bruce D."/>
            <person name="Han C."/>
            <person name="Tapia R."/>
            <person name="Gilna P."/>
            <person name="Schmutz J."/>
            <person name="Larimer F."/>
            <person name="Land M."/>
            <person name="Hauser L."/>
            <person name="Kyrpides N."/>
            <person name="Mikhailova N."/>
            <person name="Richardson P."/>
        </authorList>
    </citation>
    <scope>NUCLEOTIDE SEQUENCE [LARGE SCALE GENOMIC DNA]</scope>
    <source>
        <strain>NCIMB 400</strain>
    </source>
</reference>
<name>RS16_SHEFN</name>
<evidence type="ECO:0000255" key="1">
    <source>
        <dbReference type="HAMAP-Rule" id="MF_00385"/>
    </source>
</evidence>
<evidence type="ECO:0000305" key="2"/>
<gene>
    <name evidence="1" type="primary">rpsP</name>
    <name type="ordered locus">Sfri_2920</name>
</gene>
<dbReference type="EMBL" id="CP000447">
    <property type="protein sequence ID" value="ABI72759.1"/>
    <property type="molecule type" value="Genomic_DNA"/>
</dbReference>
<dbReference type="RefSeq" id="WP_011638368.1">
    <property type="nucleotide sequence ID" value="NC_008345.1"/>
</dbReference>
<dbReference type="SMR" id="Q07Z05"/>
<dbReference type="STRING" id="318167.Sfri_2920"/>
<dbReference type="KEGG" id="sfr:Sfri_2920"/>
<dbReference type="eggNOG" id="COG0228">
    <property type="taxonomic scope" value="Bacteria"/>
</dbReference>
<dbReference type="HOGENOM" id="CLU_100590_5_1_6"/>
<dbReference type="OrthoDB" id="9807878at2"/>
<dbReference type="Proteomes" id="UP000000684">
    <property type="component" value="Chromosome"/>
</dbReference>
<dbReference type="GO" id="GO:0005737">
    <property type="term" value="C:cytoplasm"/>
    <property type="evidence" value="ECO:0007669"/>
    <property type="project" value="UniProtKB-ARBA"/>
</dbReference>
<dbReference type="GO" id="GO:0015935">
    <property type="term" value="C:small ribosomal subunit"/>
    <property type="evidence" value="ECO:0007669"/>
    <property type="project" value="TreeGrafter"/>
</dbReference>
<dbReference type="GO" id="GO:0003735">
    <property type="term" value="F:structural constituent of ribosome"/>
    <property type="evidence" value="ECO:0007669"/>
    <property type="project" value="InterPro"/>
</dbReference>
<dbReference type="GO" id="GO:0006412">
    <property type="term" value="P:translation"/>
    <property type="evidence" value="ECO:0007669"/>
    <property type="project" value="UniProtKB-UniRule"/>
</dbReference>
<dbReference type="FunFam" id="3.30.1320.10:FF:000001">
    <property type="entry name" value="30S ribosomal protein S16"/>
    <property type="match status" value="1"/>
</dbReference>
<dbReference type="Gene3D" id="3.30.1320.10">
    <property type="match status" value="1"/>
</dbReference>
<dbReference type="HAMAP" id="MF_00385">
    <property type="entry name" value="Ribosomal_bS16"/>
    <property type="match status" value="1"/>
</dbReference>
<dbReference type="InterPro" id="IPR000307">
    <property type="entry name" value="Ribosomal_bS16"/>
</dbReference>
<dbReference type="InterPro" id="IPR020592">
    <property type="entry name" value="Ribosomal_bS16_CS"/>
</dbReference>
<dbReference type="InterPro" id="IPR023803">
    <property type="entry name" value="Ribosomal_bS16_dom_sf"/>
</dbReference>
<dbReference type="NCBIfam" id="TIGR00002">
    <property type="entry name" value="S16"/>
    <property type="match status" value="1"/>
</dbReference>
<dbReference type="PANTHER" id="PTHR12919">
    <property type="entry name" value="30S RIBOSOMAL PROTEIN S16"/>
    <property type="match status" value="1"/>
</dbReference>
<dbReference type="PANTHER" id="PTHR12919:SF20">
    <property type="entry name" value="SMALL RIBOSOMAL SUBUNIT PROTEIN BS16M"/>
    <property type="match status" value="1"/>
</dbReference>
<dbReference type="Pfam" id="PF00886">
    <property type="entry name" value="Ribosomal_S16"/>
    <property type="match status" value="1"/>
</dbReference>
<dbReference type="SUPFAM" id="SSF54565">
    <property type="entry name" value="Ribosomal protein S16"/>
    <property type="match status" value="1"/>
</dbReference>
<dbReference type="PROSITE" id="PS00732">
    <property type="entry name" value="RIBOSOMAL_S16"/>
    <property type="match status" value="1"/>
</dbReference>